<evidence type="ECO:0000250" key="1">
    <source>
        <dbReference type="UniProtKB" id="P20817"/>
    </source>
</evidence>
<evidence type="ECO:0000250" key="2">
    <source>
        <dbReference type="UniProtKB" id="P24464"/>
    </source>
</evidence>
<evidence type="ECO:0000250" key="3">
    <source>
        <dbReference type="UniProtKB" id="P51869"/>
    </source>
</evidence>
<evidence type="ECO:0000255" key="4"/>
<evidence type="ECO:0000255" key="5">
    <source>
        <dbReference type="RuleBase" id="RU000461"/>
    </source>
</evidence>
<evidence type="ECO:0000269" key="6">
    <source>
    </source>
</evidence>
<evidence type="ECO:0000303" key="7">
    <source>
    </source>
</evidence>
<evidence type="ECO:0000305" key="8">
    <source>
    </source>
</evidence>
<evidence type="ECO:0000312" key="9">
    <source>
        <dbReference type="MGI" id="MGI:3611747"/>
    </source>
</evidence>
<name>CP4CB_MOUSE</name>
<sequence length="508" mass="58309">MSASALSSIRFPGSISEYLQVASVLSLLLLLFKTAQLYLHRQWLLSSTQQFPSPPSHWLFGHKILKDQDLQDILTRIKNFPSACPQWLWGSKVRIQVYDPDYMKLILGRSDPKAHGSYRFLAPWIGRGLLLLDGQTWFQHRRMLTPAFHYDILKPYTEIMADSVHVMLDKWEQIVGQDSTLEIFQHITLMTLDTIMKCAFSHEGSVQLDRKYKSYIQAVEDLNNLFFLRVRNIFHQNDIIYRVSSNGCLANSACQLAHDHTDQVIKSRRSQLQDEEELEKLKKKRRLDFLDILLFARMENGKSLSDKDLRAEVDTFMFEGHDTTASGISWIFYALATNPEHQQRCRKEIQSLLGDGASITWNDLDKMPYTTMCIKEALRIYPPVPSVSRELSSPVTFPDGRSLPKGIHVMLSFYGLHHNPTVWPNPEVFDPSRFAPGSSRHSHSFLPFSGGARNCIGKQFAMNELKVAVALTLLRFELLPDPTRVPIPIPRIVLKSKNGIHLHLKKLQ</sequence>
<gene>
    <name evidence="7 9" type="primary">Cyp4a12b</name>
</gene>
<proteinExistence type="evidence at protein level"/>
<protein>
    <recommendedName>
        <fullName evidence="7">Cytochrome P450 4A12B</fullName>
        <ecNumber evidence="6">1.14.14.1</ecNumber>
    </recommendedName>
</protein>
<dbReference type="EC" id="1.14.14.1" evidence="6"/>
<dbReference type="EMBL" id="AL627182">
    <property type="status" value="NOT_ANNOTATED_CDS"/>
    <property type="molecule type" value="Genomic_DNA"/>
</dbReference>
<dbReference type="CCDS" id="CCDS18490.1"/>
<dbReference type="RefSeq" id="NP_758510.2">
    <property type="nucleotide sequence ID" value="NM_172306.2"/>
</dbReference>
<dbReference type="SMR" id="A2A974"/>
<dbReference type="FunCoup" id="A2A974">
    <property type="interactions" value="371"/>
</dbReference>
<dbReference type="STRING" id="10090.ENSMUSP00000092487"/>
<dbReference type="SwissLipids" id="SLP:000000506"/>
<dbReference type="iPTMnet" id="A2A974"/>
<dbReference type="PhosphoSitePlus" id="A2A974"/>
<dbReference type="jPOST" id="A2A974"/>
<dbReference type="PaxDb" id="10090-ENSMUSP00000092487"/>
<dbReference type="PeptideAtlas" id="A2A974"/>
<dbReference type="ProteomicsDB" id="365309"/>
<dbReference type="DNASU" id="13118"/>
<dbReference type="Ensembl" id="ENSMUST00000094887.4">
    <property type="protein sequence ID" value="ENSMUSP00000092487.4"/>
    <property type="gene ID" value="ENSMUSG00000078597.3"/>
</dbReference>
<dbReference type="GeneID" id="13118"/>
<dbReference type="KEGG" id="mmu:13118"/>
<dbReference type="UCSC" id="uc008ues.1">
    <property type="organism name" value="mouse"/>
</dbReference>
<dbReference type="AGR" id="MGI:3611747"/>
<dbReference type="CTD" id="13118"/>
<dbReference type="MGI" id="MGI:3611747">
    <property type="gene designation" value="Cyp4a12b"/>
</dbReference>
<dbReference type="VEuPathDB" id="HostDB:ENSMUSG00000078597"/>
<dbReference type="eggNOG" id="KOG0157">
    <property type="taxonomic scope" value="Eukaryota"/>
</dbReference>
<dbReference type="GeneTree" id="ENSGT00940000155173"/>
<dbReference type="HOGENOM" id="CLU_001570_5_1_1"/>
<dbReference type="InParanoid" id="A2A974"/>
<dbReference type="OMA" id="GLASCPH"/>
<dbReference type="OrthoDB" id="49592at9989"/>
<dbReference type="PhylomeDB" id="A2A974"/>
<dbReference type="TreeFam" id="TF105088"/>
<dbReference type="Reactome" id="R-MMU-211935">
    <property type="pathway name" value="Fatty acids"/>
</dbReference>
<dbReference type="Reactome" id="R-MMU-211958">
    <property type="pathway name" value="Miscellaneous substrates"/>
</dbReference>
<dbReference type="Reactome" id="R-MMU-211979">
    <property type="pathway name" value="Eicosanoids"/>
</dbReference>
<dbReference type="Reactome" id="R-MMU-2142691">
    <property type="pathway name" value="Synthesis of Leukotrienes (LT) and Eoxins (EX)"/>
</dbReference>
<dbReference type="Reactome" id="R-MMU-2142816">
    <property type="pathway name" value="Synthesis of (16-20)-hydroxyeicosatetraenoic acids (HETE)"/>
</dbReference>
<dbReference type="UniPathway" id="UPA00199"/>
<dbReference type="BioGRID-ORCS" id="13118">
    <property type="hits" value="2 hits in 80 CRISPR screens"/>
</dbReference>
<dbReference type="PRO" id="PR:A2A974"/>
<dbReference type="Proteomes" id="UP000000589">
    <property type="component" value="Chromosome 4"/>
</dbReference>
<dbReference type="RNAct" id="A2A974">
    <property type="molecule type" value="protein"/>
</dbReference>
<dbReference type="Bgee" id="ENSMUSG00000078597">
    <property type="expression patterns" value="Expressed in cortex of kidney and 24 other cell types or tissues"/>
</dbReference>
<dbReference type="GO" id="GO:0005789">
    <property type="term" value="C:endoplasmic reticulum membrane"/>
    <property type="evidence" value="ECO:0007669"/>
    <property type="project" value="UniProtKB-SubCell"/>
</dbReference>
<dbReference type="GO" id="GO:0052869">
    <property type="term" value="F:arachidonate omega-hydroxylase activity"/>
    <property type="evidence" value="ECO:0000314"/>
    <property type="project" value="UniProtKB"/>
</dbReference>
<dbReference type="GO" id="GO:0020037">
    <property type="term" value="F:heme binding"/>
    <property type="evidence" value="ECO:0007669"/>
    <property type="project" value="InterPro"/>
</dbReference>
<dbReference type="GO" id="GO:0005506">
    <property type="term" value="F:iron ion binding"/>
    <property type="evidence" value="ECO:0007669"/>
    <property type="project" value="InterPro"/>
</dbReference>
<dbReference type="GO" id="GO:0097267">
    <property type="term" value="P:omega-hydroxylase P450 pathway"/>
    <property type="evidence" value="ECO:0000314"/>
    <property type="project" value="UniProtKB"/>
</dbReference>
<dbReference type="CDD" id="cd20678">
    <property type="entry name" value="CYP4B-like"/>
    <property type="match status" value="1"/>
</dbReference>
<dbReference type="FunFam" id="1.10.630.10:FF:000005">
    <property type="entry name" value="cytochrome P450 4F22 isoform X2"/>
    <property type="match status" value="1"/>
</dbReference>
<dbReference type="Gene3D" id="1.10.630.10">
    <property type="entry name" value="Cytochrome P450"/>
    <property type="match status" value="1"/>
</dbReference>
<dbReference type="InterPro" id="IPR001128">
    <property type="entry name" value="Cyt_P450"/>
</dbReference>
<dbReference type="InterPro" id="IPR017972">
    <property type="entry name" value="Cyt_P450_CS"/>
</dbReference>
<dbReference type="InterPro" id="IPR002401">
    <property type="entry name" value="Cyt_P450_E_grp-I"/>
</dbReference>
<dbReference type="InterPro" id="IPR036396">
    <property type="entry name" value="Cyt_P450_sf"/>
</dbReference>
<dbReference type="InterPro" id="IPR050196">
    <property type="entry name" value="Cytochrome_P450_Monoox"/>
</dbReference>
<dbReference type="PANTHER" id="PTHR24291:SF39">
    <property type="entry name" value="CYTOCHROME P450 4A11-RELATED"/>
    <property type="match status" value="1"/>
</dbReference>
<dbReference type="PANTHER" id="PTHR24291">
    <property type="entry name" value="CYTOCHROME P450 FAMILY 4"/>
    <property type="match status" value="1"/>
</dbReference>
<dbReference type="Pfam" id="PF00067">
    <property type="entry name" value="p450"/>
    <property type="match status" value="1"/>
</dbReference>
<dbReference type="PRINTS" id="PR00463">
    <property type="entry name" value="EP450I"/>
</dbReference>
<dbReference type="PRINTS" id="PR00385">
    <property type="entry name" value="P450"/>
</dbReference>
<dbReference type="SUPFAM" id="SSF48264">
    <property type="entry name" value="Cytochrome P450"/>
    <property type="match status" value="1"/>
</dbReference>
<dbReference type="PROSITE" id="PS00086">
    <property type="entry name" value="CYTOCHROME_P450"/>
    <property type="match status" value="1"/>
</dbReference>
<organism>
    <name type="scientific">Mus musculus</name>
    <name type="common">Mouse</name>
    <dbReference type="NCBI Taxonomy" id="10090"/>
    <lineage>
        <taxon>Eukaryota</taxon>
        <taxon>Metazoa</taxon>
        <taxon>Chordata</taxon>
        <taxon>Craniata</taxon>
        <taxon>Vertebrata</taxon>
        <taxon>Euteleostomi</taxon>
        <taxon>Mammalia</taxon>
        <taxon>Eutheria</taxon>
        <taxon>Euarchontoglires</taxon>
        <taxon>Glires</taxon>
        <taxon>Rodentia</taxon>
        <taxon>Myomorpha</taxon>
        <taxon>Muroidea</taxon>
        <taxon>Muridae</taxon>
        <taxon>Murinae</taxon>
        <taxon>Mus</taxon>
        <taxon>Mus</taxon>
    </lineage>
</organism>
<comment type="function">
    <text evidence="6">A cytochrome P450 monooxygenase involved in the metabolism of fatty acids and their oxygenated derivatives (oxylipins) (PubMed:17112342). Mechanistically, uses molecular oxygen inserting one oxygen atom into a substrate, and reducing the second into a water molecule, with two electrons provided by NADPH via cytochrome P450 reductase (CPR; NADPH-ferrihemoprotein reductase) (PubMed:17112342). Catalyzes predominantly the oxidation of the terminal carbon (omega-oxidation) of saturated and unsaturated fatty acids (PubMed:17112342). May act as a major omega-hydroxylase for dodecanoic (lauric) acid in kidney (PubMed:17112342). Participates in omega-hydroxylation of (5Z,8Z,11Z,14Z)-eicosatetraenoic acid (arachidonate) to 20-hydroxyeicosatetraenoic acid (20-HETE), a signaling molecule acting both as vasoconstrictive and natriuretic with overall effect on arterial blood pressure (PubMed:17112342). Acts as an omega-hydroxylase and epoxidase toward (5Z,8Z,11Z,14Z,17Z)-eicosapentaenoc acid (EPA). Catalyzes the epoxidation of the last double bond of EPA with no preferred stereoselectivity, producing both (R,S) and (S,R) stereoisomers (PubMed:17112342). Can also catalyze the omega-1 and omega-2 oxidation of fatty acids with lower efficiency (PubMed:17112342).</text>
</comment>
<comment type="catalytic activity">
    <reaction evidence="6">
        <text>an organic molecule + reduced [NADPH--hemoprotein reductase] + O2 = an alcohol + oxidized [NADPH--hemoprotein reductase] + H2O + H(+)</text>
        <dbReference type="Rhea" id="RHEA:17149"/>
        <dbReference type="Rhea" id="RHEA-COMP:11964"/>
        <dbReference type="Rhea" id="RHEA-COMP:11965"/>
        <dbReference type="ChEBI" id="CHEBI:15377"/>
        <dbReference type="ChEBI" id="CHEBI:15378"/>
        <dbReference type="ChEBI" id="CHEBI:15379"/>
        <dbReference type="ChEBI" id="CHEBI:30879"/>
        <dbReference type="ChEBI" id="CHEBI:57618"/>
        <dbReference type="ChEBI" id="CHEBI:58210"/>
        <dbReference type="ChEBI" id="CHEBI:142491"/>
        <dbReference type="EC" id="1.14.14.1"/>
    </reaction>
    <physiologicalReaction direction="left-to-right" evidence="8">
        <dbReference type="Rhea" id="RHEA:17150"/>
    </physiologicalReaction>
</comment>
<comment type="catalytic activity">
    <reaction evidence="6">
        <text>dodecanoate + reduced [NADPH--hemoprotein reductase] + O2 = 11-hydroxydodecanoate + oxidized [NADPH--hemoprotein reductase] + H2O + H(+)</text>
        <dbReference type="Rhea" id="RHEA:39751"/>
        <dbReference type="Rhea" id="RHEA-COMP:11964"/>
        <dbReference type="Rhea" id="RHEA-COMP:11965"/>
        <dbReference type="ChEBI" id="CHEBI:15377"/>
        <dbReference type="ChEBI" id="CHEBI:15378"/>
        <dbReference type="ChEBI" id="CHEBI:15379"/>
        <dbReference type="ChEBI" id="CHEBI:18262"/>
        <dbReference type="ChEBI" id="CHEBI:57618"/>
        <dbReference type="ChEBI" id="CHEBI:58210"/>
        <dbReference type="ChEBI" id="CHEBI:76628"/>
    </reaction>
    <physiologicalReaction direction="left-to-right" evidence="8">
        <dbReference type="Rhea" id="RHEA:39752"/>
    </physiologicalReaction>
</comment>
<comment type="catalytic activity">
    <reaction evidence="6">
        <text>dodecanoate + reduced [NADPH--hemoprotein reductase] + O2 = 12-hydroxydodecanoate + oxidized [NADPH--hemoprotein reductase] + H2O + H(+)</text>
        <dbReference type="Rhea" id="RHEA:38947"/>
        <dbReference type="Rhea" id="RHEA-COMP:11964"/>
        <dbReference type="Rhea" id="RHEA-COMP:11965"/>
        <dbReference type="ChEBI" id="CHEBI:15377"/>
        <dbReference type="ChEBI" id="CHEBI:15378"/>
        <dbReference type="ChEBI" id="CHEBI:15379"/>
        <dbReference type="ChEBI" id="CHEBI:18262"/>
        <dbReference type="ChEBI" id="CHEBI:36204"/>
        <dbReference type="ChEBI" id="CHEBI:57618"/>
        <dbReference type="ChEBI" id="CHEBI:58210"/>
    </reaction>
    <physiologicalReaction direction="left-to-right" evidence="8">
        <dbReference type="Rhea" id="RHEA:38948"/>
    </physiologicalReaction>
</comment>
<comment type="catalytic activity">
    <reaction evidence="6">
        <text>(5Z,8Z,11Z,14Z)-eicosatetraenoate + reduced [NADPH--hemoprotein reductase] + O2 = 18-hydroxy-(5Z,8Z,11Z,14Z)-eicosatetraenoate + oxidized [NADPH--hemoprotein reductase] + H2O + H(+)</text>
        <dbReference type="Rhea" id="RHEA:39811"/>
        <dbReference type="Rhea" id="RHEA-COMP:11964"/>
        <dbReference type="Rhea" id="RHEA-COMP:11965"/>
        <dbReference type="ChEBI" id="CHEBI:15377"/>
        <dbReference type="ChEBI" id="CHEBI:15378"/>
        <dbReference type="ChEBI" id="CHEBI:15379"/>
        <dbReference type="ChEBI" id="CHEBI:32395"/>
        <dbReference type="ChEBI" id="CHEBI:57618"/>
        <dbReference type="ChEBI" id="CHEBI:58210"/>
        <dbReference type="ChEBI" id="CHEBI:63590"/>
    </reaction>
    <physiologicalReaction direction="left-to-right" evidence="8">
        <dbReference type="Rhea" id="RHEA:39812"/>
    </physiologicalReaction>
</comment>
<comment type="catalytic activity">
    <reaction evidence="6">
        <text>(5Z,8Z,11Z,14Z)-eicosatetraenoate + reduced [NADPH--hemoprotein reductase] + O2 = 19-hydroxy-(5Z,8Z,11Z,14Z)-eicosatetraenoate + oxidized [NADPH--hemoprotein reductase] + H2O + H(+)</text>
        <dbReference type="Rhea" id="RHEA:39759"/>
        <dbReference type="Rhea" id="RHEA-COMP:11964"/>
        <dbReference type="Rhea" id="RHEA-COMP:11965"/>
        <dbReference type="ChEBI" id="CHEBI:15377"/>
        <dbReference type="ChEBI" id="CHEBI:15378"/>
        <dbReference type="ChEBI" id="CHEBI:15379"/>
        <dbReference type="ChEBI" id="CHEBI:32395"/>
        <dbReference type="ChEBI" id="CHEBI:57618"/>
        <dbReference type="ChEBI" id="CHEBI:58210"/>
        <dbReference type="ChEBI" id="CHEBI:76627"/>
    </reaction>
    <physiologicalReaction direction="left-to-right" evidence="8">
        <dbReference type="Rhea" id="RHEA:39760"/>
    </physiologicalReaction>
</comment>
<comment type="catalytic activity">
    <reaction evidence="6">
        <text>(5Z,8Z,11Z,14Z)-eicosatetraenoate + reduced [NADPH--hemoprotein reductase] + O2 = 20-hydroxy-(5Z,8Z,11Z,14Z)-eicosatetraenoate + oxidized [NADPH--hemoprotein reductase] + H2O + H(+)</text>
        <dbReference type="Rhea" id="RHEA:39755"/>
        <dbReference type="Rhea" id="RHEA-COMP:11964"/>
        <dbReference type="Rhea" id="RHEA-COMP:11965"/>
        <dbReference type="ChEBI" id="CHEBI:15377"/>
        <dbReference type="ChEBI" id="CHEBI:15378"/>
        <dbReference type="ChEBI" id="CHEBI:15379"/>
        <dbReference type="ChEBI" id="CHEBI:32395"/>
        <dbReference type="ChEBI" id="CHEBI:57618"/>
        <dbReference type="ChEBI" id="CHEBI:58210"/>
        <dbReference type="ChEBI" id="CHEBI:76624"/>
    </reaction>
    <physiologicalReaction direction="left-to-right" evidence="8">
        <dbReference type="Rhea" id="RHEA:39756"/>
    </physiologicalReaction>
</comment>
<comment type="catalytic activity">
    <reaction evidence="6">
        <text>(5Z,8Z,11Z,14Z,17Z)-eicosapentaenoate + reduced [NADPH--hemoprotein reductase] + O2 = 19-hydroxy-(5Z,8Z,11Z,14Z,17Z)-eicosapentaenoate + oxidized [NADPH--hemoprotein reductase] + H2O + H(+)</text>
        <dbReference type="Rhea" id="RHEA:39787"/>
        <dbReference type="Rhea" id="RHEA-COMP:11964"/>
        <dbReference type="Rhea" id="RHEA-COMP:11965"/>
        <dbReference type="ChEBI" id="CHEBI:15377"/>
        <dbReference type="ChEBI" id="CHEBI:15378"/>
        <dbReference type="ChEBI" id="CHEBI:15379"/>
        <dbReference type="ChEBI" id="CHEBI:57618"/>
        <dbReference type="ChEBI" id="CHEBI:58210"/>
        <dbReference type="ChEBI" id="CHEBI:58562"/>
        <dbReference type="ChEBI" id="CHEBI:76636"/>
    </reaction>
    <physiologicalReaction direction="left-to-right" evidence="8">
        <dbReference type="Rhea" id="RHEA:39788"/>
    </physiologicalReaction>
</comment>
<comment type="catalytic activity">
    <reaction evidence="6">
        <text>(5Z,8Z,11Z,14Z,17Z)-eicosapentaenoate + reduced [NADPH--hemoprotein reductase] + O2 = 20-hydroxy-(5Z,8Z,11Z,14Z,17Z)-eicosapentaenoate + oxidized [NADPH--hemoprotein reductase] + H2O + H(+)</text>
        <dbReference type="Rhea" id="RHEA:39791"/>
        <dbReference type="Rhea" id="RHEA-COMP:11964"/>
        <dbReference type="Rhea" id="RHEA-COMP:11965"/>
        <dbReference type="ChEBI" id="CHEBI:15377"/>
        <dbReference type="ChEBI" id="CHEBI:15378"/>
        <dbReference type="ChEBI" id="CHEBI:15379"/>
        <dbReference type="ChEBI" id="CHEBI:57618"/>
        <dbReference type="ChEBI" id="CHEBI:58210"/>
        <dbReference type="ChEBI" id="CHEBI:58562"/>
        <dbReference type="ChEBI" id="CHEBI:76639"/>
    </reaction>
    <physiologicalReaction direction="left-to-right" evidence="8">
        <dbReference type="Rhea" id="RHEA:39792"/>
    </physiologicalReaction>
</comment>
<comment type="catalytic activity">
    <reaction evidence="6">
        <text>(5Z,8Z,11Z,14Z,17Z)-eicosapentaenoate + reduced [NADPH--hemoprotein reductase] + O2 = (17S,18R)-epoxy-(5Z,8Z,11Z,14Z)-eicosatetraenoate + oxidized [NADPH--hemoprotein reductase] + H2O + H(+)</text>
        <dbReference type="Rhea" id="RHEA:39783"/>
        <dbReference type="Rhea" id="RHEA-COMP:11964"/>
        <dbReference type="Rhea" id="RHEA-COMP:11965"/>
        <dbReference type="ChEBI" id="CHEBI:15377"/>
        <dbReference type="ChEBI" id="CHEBI:15378"/>
        <dbReference type="ChEBI" id="CHEBI:15379"/>
        <dbReference type="ChEBI" id="CHEBI:57618"/>
        <dbReference type="ChEBI" id="CHEBI:58210"/>
        <dbReference type="ChEBI" id="CHEBI:58562"/>
        <dbReference type="ChEBI" id="CHEBI:76635"/>
    </reaction>
    <physiologicalReaction direction="left-to-right" evidence="8">
        <dbReference type="Rhea" id="RHEA:39784"/>
    </physiologicalReaction>
</comment>
<comment type="catalytic activity">
    <reaction evidence="6">
        <text>(5Z,8Z,11Z,14Z,17Z)-eicosapentaenoate + reduced [NADPH--hemoprotein reductase] + O2 = (17R,18S)-epoxy-(5Z,8Z,11Z,14Z)-eicosatetraenoate + oxidized [NADPH--hemoprotein reductase] + H2O + H(+)</text>
        <dbReference type="Rhea" id="RHEA:39779"/>
        <dbReference type="Rhea" id="RHEA-COMP:11964"/>
        <dbReference type="Rhea" id="RHEA-COMP:11965"/>
        <dbReference type="ChEBI" id="CHEBI:15377"/>
        <dbReference type="ChEBI" id="CHEBI:15378"/>
        <dbReference type="ChEBI" id="CHEBI:15379"/>
        <dbReference type="ChEBI" id="CHEBI:57618"/>
        <dbReference type="ChEBI" id="CHEBI:58210"/>
        <dbReference type="ChEBI" id="CHEBI:58562"/>
        <dbReference type="ChEBI" id="CHEBI:76634"/>
    </reaction>
    <physiologicalReaction direction="left-to-right" evidence="8">
        <dbReference type="Rhea" id="RHEA:39780"/>
    </physiologicalReaction>
</comment>
<comment type="cofactor">
    <cofactor evidence="1">
        <name>heme</name>
        <dbReference type="ChEBI" id="CHEBI:30413"/>
    </cofactor>
</comment>
<comment type="activity regulation">
    <text evidence="6">Activated by cytochrome b5. The Vmax almost doubles in the presence of cytochrome b5.</text>
</comment>
<comment type="biophysicochemical properties">
    <kinetics>
        <KM evidence="6">2 uM for dodecanoic acid</KM>
        <KM evidence="6">43 uM for (5Z,8Z,11Z,14Z)-eicosatetraenoic acid (without cytochrome b5)</KM>
        <KM evidence="6">72 uM for (5Z,8Z,11Z,14Z)-eicosatetraenoic acid (with cytochrome b5)</KM>
        <KM evidence="6">41 uM for (5Z,8Z,11Z,14Z,17Z)-eicosapentaenoic acid (without cytochrome b5)</KM>
        <KM evidence="6">62 uM for (5Z,8Z,11Z,14Z,17Z)-eicosapentaenoic acid (with cytochrome b5)</KM>
        <Vmax evidence="6">40.0 nmol/min/nmol enzyme toward dodecanoic acid</Vmax>
        <Vmax evidence="6">10.0 nmol/min/nmol enzyme toward (5Z,8Z,11Z,14Z)-eicosatetraenoic acid (without cytochrome b5)</Vmax>
        <Vmax evidence="6">19.0 nmol/min/nmol enzyme toward (5Z,8Z,11Z,14Z)-eicosatetraenoic acid (with cytochrome b5)</Vmax>
        <Vmax evidence="6">15.0 nmol/min/nmol enzyme toward (5Z,8Z,11Z,14Z,17Z)-eicosapentaenoic acid (without cytochrome b5)</Vmax>
        <Vmax evidence="6">30.0 nmol/min/nmol enzyme toward (5Z,8Z,11Z,14Z,17Z)-eicosapentaenoic acid (with cytochrome b5)</Vmax>
    </kinetics>
</comment>
<comment type="pathway">
    <text evidence="8">Lipid metabolism; fatty acid metabolism.</text>
</comment>
<comment type="subcellular location">
    <subcellularLocation>
        <location evidence="6">Endoplasmic reticulum membrane</location>
        <topology>Peripheral membrane protein</topology>
    </subcellularLocation>
    <subcellularLocation>
        <location evidence="6">Microsome membrane</location>
        <topology>Peripheral membrane protein</topology>
    </subcellularLocation>
</comment>
<comment type="tissue specificity">
    <text evidence="6">Expressed in lung, but almost undetectable in the kidneys of five different strains.</text>
</comment>
<comment type="similarity">
    <text evidence="5">Belongs to the cytochrome P450 family.</text>
</comment>
<reference key="1">
    <citation type="journal article" date="2009" name="PLoS Biol.">
        <title>Lineage-specific biology revealed by a finished genome assembly of the mouse.</title>
        <authorList>
            <person name="Church D.M."/>
            <person name="Goodstadt L."/>
            <person name="Hillier L.W."/>
            <person name="Zody M.C."/>
            <person name="Goldstein S."/>
            <person name="She X."/>
            <person name="Bult C.J."/>
            <person name="Agarwala R."/>
            <person name="Cherry J.L."/>
            <person name="DiCuccio M."/>
            <person name="Hlavina W."/>
            <person name="Kapustin Y."/>
            <person name="Meric P."/>
            <person name="Maglott D."/>
            <person name="Birtle Z."/>
            <person name="Marques A.C."/>
            <person name="Graves T."/>
            <person name="Zhou S."/>
            <person name="Teague B."/>
            <person name="Potamousis K."/>
            <person name="Churas C."/>
            <person name="Place M."/>
            <person name="Herschleb J."/>
            <person name="Runnheim R."/>
            <person name="Forrest D."/>
            <person name="Amos-Landgraf J."/>
            <person name="Schwartz D.C."/>
            <person name="Cheng Z."/>
            <person name="Lindblad-Toh K."/>
            <person name="Eichler E.E."/>
            <person name="Ponting C.P."/>
        </authorList>
    </citation>
    <scope>NUCLEOTIDE SEQUENCE [LARGE SCALE GENOMIC DNA]</scope>
    <source>
        <strain>C57BL/6J</strain>
    </source>
</reference>
<reference key="2">
    <citation type="journal article" date="2007" name="Biochem. J.">
        <title>Mouse Cyp4a isoforms: enzymatic properties, gender- and strain-specific expression, and role in renal 20-hydroxyeicosatetraenoic acid formation.</title>
        <authorList>
            <person name="Muller D.N."/>
            <person name="Schmidt C."/>
            <person name="Barbosa-Sicard E."/>
            <person name="Wellner M."/>
            <person name="Gross V."/>
            <person name="Hercule H."/>
            <person name="Markovic M."/>
            <person name="Honeck H."/>
            <person name="Luft F.C."/>
            <person name="Schunck W.H."/>
        </authorList>
    </citation>
    <scope>FUNCTION</scope>
    <scope>CATALYTIC ACTIVITY</scope>
    <scope>BIOPHYSICOCHEMICAL PROPERTIES</scope>
    <scope>ACTIVITY REGULATION</scope>
    <scope>TISSUE SPECIFICITY</scope>
    <scope>PATHWAY</scope>
    <scope>SUBCELLULAR LOCATION</scope>
</reference>
<accession>A2A974</accession>
<keyword id="KW-0256">Endoplasmic reticulum</keyword>
<keyword id="KW-0349">Heme</keyword>
<keyword id="KW-0408">Iron</keyword>
<keyword id="KW-0472">Membrane</keyword>
<keyword id="KW-0479">Metal-binding</keyword>
<keyword id="KW-0492">Microsome</keyword>
<keyword id="KW-0503">Monooxygenase</keyword>
<keyword id="KW-0560">Oxidoreductase</keyword>
<keyword id="KW-1185">Reference proteome</keyword>
<keyword id="KW-0732">Signal</keyword>
<feature type="signal peptide" evidence="4">
    <location>
        <begin position="1"/>
        <end position="37"/>
    </location>
</feature>
<feature type="chain" id="PRO_0000448898" description="Cytochrome P450 4A12B" evidence="4">
    <location>
        <begin position="38"/>
        <end position="508"/>
    </location>
</feature>
<feature type="binding site" description="covalent" evidence="3">
    <location>
        <position position="319"/>
    </location>
    <ligand>
        <name>heme</name>
        <dbReference type="ChEBI" id="CHEBI:30413"/>
    </ligand>
</feature>
<feature type="binding site" description="axial binding residue" evidence="2">
    <location>
        <position position="455"/>
    </location>
    <ligand>
        <name>heme</name>
        <dbReference type="ChEBI" id="CHEBI:30413"/>
    </ligand>
    <ligandPart>
        <name>Fe</name>
        <dbReference type="ChEBI" id="CHEBI:18248"/>
    </ligandPart>
</feature>